<gene>
    <name evidence="9" type="primary">NME5</name>
</gene>
<protein>
    <recommendedName>
        <fullName>Nucleoside diphosphate kinase homolog 5</fullName>
        <shortName>NDK-H 5</shortName>
        <shortName>NDP kinase homolog 5</shortName>
    </recommendedName>
    <alternativeName>
        <fullName evidence="7">3'-5' exonuclease NME5</fullName>
        <ecNumber evidence="3">3.1.-.-</ecNumber>
    </alternativeName>
    <alternativeName>
        <fullName>Inhibitor of p53-induced apoptosis-beta</fullName>
        <shortName>IPIA-beta</shortName>
    </alternativeName>
    <alternativeName>
        <fullName>Testis-specific nm23 homolog</fullName>
    </alternativeName>
    <alternativeName>
        <fullName>nm23-H5</fullName>
    </alternativeName>
</protein>
<sequence length="212" mass="24236">MEISMPPPQIYVEKTLAIIKPDIVDKEEEIQDIILRSGFTIVQRRKLRLSPEQCSNFYVEKYGKMFFPNLTAYMSSGPLVAMILARHKAISYWLELLGPNNSLVAKETHPDSLRAIYGTDDLRNALHGSNDFAAAEREIRFMFPEVIVEPIPIGQAAKDYLNLHIMPTLLEGLTELCKQKPADPLIWLADWLLKNNPNKPKLCHHPIVEEPY</sequence>
<feature type="chain" id="PRO_0000137125" description="Nucleoside diphosphate kinase homolog 5">
    <location>
        <begin position="1"/>
        <end position="212"/>
    </location>
</feature>
<feature type="region of interest" description="NDK" evidence="7">
    <location>
        <begin position="13"/>
        <end position="145"/>
    </location>
</feature>
<feature type="sequence variant" id="VAR_087812" description="In CILD48; uncertain significance." evidence="4">
    <location>
        <begin position="191"/>
        <end position="212"/>
    </location>
</feature>
<proteinExistence type="evidence at protein level"/>
<organism>
    <name type="scientific">Homo sapiens</name>
    <name type="common">Human</name>
    <dbReference type="NCBI Taxonomy" id="9606"/>
    <lineage>
        <taxon>Eukaryota</taxon>
        <taxon>Metazoa</taxon>
        <taxon>Chordata</taxon>
        <taxon>Craniata</taxon>
        <taxon>Vertebrata</taxon>
        <taxon>Euteleostomi</taxon>
        <taxon>Mammalia</taxon>
        <taxon>Eutheria</taxon>
        <taxon>Euarchontoglires</taxon>
        <taxon>Primates</taxon>
        <taxon>Haplorrhini</taxon>
        <taxon>Catarrhini</taxon>
        <taxon>Hominidae</taxon>
        <taxon>Homo</taxon>
    </lineage>
</organism>
<reference key="1">
    <citation type="journal article" date="1998" name="FEBS Lett.">
        <title>A new human nm23 homologue (nm23-H5) specifically expressed in testis germinal cells.</title>
        <authorList>
            <person name="Munier A."/>
            <person name="Feral C."/>
            <person name="Milon L."/>
            <person name="Pinon V.P.-B."/>
            <person name="Gyapay G."/>
            <person name="Capeau J."/>
            <person name="Guellaen G."/>
            <person name="Lacombe M.-L."/>
        </authorList>
    </citation>
    <scope>NUCLEOTIDE SEQUENCE [MRNA]</scope>
    <scope>TISSUE SPECIFICITY</scope>
    <scope>LACK OF NUCLEOSIDE DIPHOSPHATE KINASE ACTIVITY</scope>
    <source>
        <tissue>Gall bladder</tissue>
    </source>
</reference>
<reference key="2">
    <citation type="submission" date="1998-05" db="EMBL/GenBank/DDBJ databases">
        <authorList>
            <person name="Mehus J.G."/>
            <person name="Lambeth D.O."/>
        </authorList>
    </citation>
    <scope>NUCLEOTIDE SEQUENCE [MRNA]</scope>
    <source>
        <tissue>Testis</tissue>
    </source>
</reference>
<reference key="3">
    <citation type="submission" date="1997-02" db="EMBL/GenBank/DDBJ databases">
        <title>Identification of a homolog of IPIA-alpha.</title>
        <authorList>
            <person name="Nakamura H."/>
            <person name="Tsuiki H."/>
            <person name="Sasaki J."/>
            <person name="Honda Y."/>
            <person name="Saya H."/>
        </authorList>
    </citation>
    <scope>NUCLEOTIDE SEQUENCE [MRNA]</scope>
    <source>
        <tissue>Brain</tissue>
    </source>
</reference>
<reference key="4">
    <citation type="journal article" date="2004" name="Nat. Genet.">
        <title>Complete sequencing and characterization of 21,243 full-length human cDNAs.</title>
        <authorList>
            <person name="Ota T."/>
            <person name="Suzuki Y."/>
            <person name="Nishikawa T."/>
            <person name="Otsuki T."/>
            <person name="Sugiyama T."/>
            <person name="Irie R."/>
            <person name="Wakamatsu A."/>
            <person name="Hayashi K."/>
            <person name="Sato H."/>
            <person name="Nagai K."/>
            <person name="Kimura K."/>
            <person name="Makita H."/>
            <person name="Sekine M."/>
            <person name="Obayashi M."/>
            <person name="Nishi T."/>
            <person name="Shibahara T."/>
            <person name="Tanaka T."/>
            <person name="Ishii S."/>
            <person name="Yamamoto J."/>
            <person name="Saito K."/>
            <person name="Kawai Y."/>
            <person name="Isono Y."/>
            <person name="Nakamura Y."/>
            <person name="Nagahari K."/>
            <person name="Murakami K."/>
            <person name="Yasuda T."/>
            <person name="Iwayanagi T."/>
            <person name="Wagatsuma M."/>
            <person name="Shiratori A."/>
            <person name="Sudo H."/>
            <person name="Hosoiri T."/>
            <person name="Kaku Y."/>
            <person name="Kodaira H."/>
            <person name="Kondo H."/>
            <person name="Sugawara M."/>
            <person name="Takahashi M."/>
            <person name="Kanda K."/>
            <person name="Yokoi T."/>
            <person name="Furuya T."/>
            <person name="Kikkawa E."/>
            <person name="Omura Y."/>
            <person name="Abe K."/>
            <person name="Kamihara K."/>
            <person name="Katsuta N."/>
            <person name="Sato K."/>
            <person name="Tanikawa M."/>
            <person name="Yamazaki M."/>
            <person name="Ninomiya K."/>
            <person name="Ishibashi T."/>
            <person name="Yamashita H."/>
            <person name="Murakawa K."/>
            <person name="Fujimori K."/>
            <person name="Tanai H."/>
            <person name="Kimata M."/>
            <person name="Watanabe M."/>
            <person name="Hiraoka S."/>
            <person name="Chiba Y."/>
            <person name="Ishida S."/>
            <person name="Ono Y."/>
            <person name="Takiguchi S."/>
            <person name="Watanabe S."/>
            <person name="Yosida M."/>
            <person name="Hotuta T."/>
            <person name="Kusano J."/>
            <person name="Kanehori K."/>
            <person name="Takahashi-Fujii A."/>
            <person name="Hara H."/>
            <person name="Tanase T.-O."/>
            <person name="Nomura Y."/>
            <person name="Togiya S."/>
            <person name="Komai F."/>
            <person name="Hara R."/>
            <person name="Takeuchi K."/>
            <person name="Arita M."/>
            <person name="Imose N."/>
            <person name="Musashino K."/>
            <person name="Yuuki H."/>
            <person name="Oshima A."/>
            <person name="Sasaki N."/>
            <person name="Aotsuka S."/>
            <person name="Yoshikawa Y."/>
            <person name="Matsunawa H."/>
            <person name="Ichihara T."/>
            <person name="Shiohata N."/>
            <person name="Sano S."/>
            <person name="Moriya S."/>
            <person name="Momiyama H."/>
            <person name="Satoh N."/>
            <person name="Takami S."/>
            <person name="Terashima Y."/>
            <person name="Suzuki O."/>
            <person name="Nakagawa S."/>
            <person name="Senoh A."/>
            <person name="Mizoguchi H."/>
            <person name="Goto Y."/>
            <person name="Shimizu F."/>
            <person name="Wakebe H."/>
            <person name="Hishigaki H."/>
            <person name="Watanabe T."/>
            <person name="Sugiyama A."/>
            <person name="Takemoto M."/>
            <person name="Kawakami B."/>
            <person name="Yamazaki M."/>
            <person name="Watanabe K."/>
            <person name="Kumagai A."/>
            <person name="Itakura S."/>
            <person name="Fukuzumi Y."/>
            <person name="Fujimori Y."/>
            <person name="Komiyama M."/>
            <person name="Tashiro H."/>
            <person name="Tanigami A."/>
            <person name="Fujiwara T."/>
            <person name="Ono T."/>
            <person name="Yamada K."/>
            <person name="Fujii Y."/>
            <person name="Ozaki K."/>
            <person name="Hirao M."/>
            <person name="Ohmori Y."/>
            <person name="Kawabata A."/>
            <person name="Hikiji T."/>
            <person name="Kobatake N."/>
            <person name="Inagaki H."/>
            <person name="Ikema Y."/>
            <person name="Okamoto S."/>
            <person name="Okitani R."/>
            <person name="Kawakami T."/>
            <person name="Noguchi S."/>
            <person name="Itoh T."/>
            <person name="Shigeta K."/>
            <person name="Senba T."/>
            <person name="Matsumura K."/>
            <person name="Nakajima Y."/>
            <person name="Mizuno T."/>
            <person name="Morinaga M."/>
            <person name="Sasaki M."/>
            <person name="Togashi T."/>
            <person name="Oyama M."/>
            <person name="Hata H."/>
            <person name="Watanabe M."/>
            <person name="Komatsu T."/>
            <person name="Mizushima-Sugano J."/>
            <person name="Satoh T."/>
            <person name="Shirai Y."/>
            <person name="Takahashi Y."/>
            <person name="Nakagawa K."/>
            <person name="Okumura K."/>
            <person name="Nagase T."/>
            <person name="Nomura N."/>
            <person name="Kikuchi H."/>
            <person name="Masuho Y."/>
            <person name="Yamashita R."/>
            <person name="Nakai K."/>
            <person name="Yada T."/>
            <person name="Nakamura Y."/>
            <person name="Ohara O."/>
            <person name="Isogai T."/>
            <person name="Sugano S."/>
        </authorList>
    </citation>
    <scope>NUCLEOTIDE SEQUENCE [LARGE SCALE MRNA]</scope>
    <source>
        <tissue>Kidney</tissue>
    </source>
</reference>
<reference key="5">
    <citation type="submission" date="2005-09" db="EMBL/GenBank/DDBJ databases">
        <authorList>
            <person name="Mural R.J."/>
            <person name="Istrail S."/>
            <person name="Sutton G.G."/>
            <person name="Florea L."/>
            <person name="Halpern A.L."/>
            <person name="Mobarry C.M."/>
            <person name="Lippert R."/>
            <person name="Walenz B."/>
            <person name="Shatkay H."/>
            <person name="Dew I."/>
            <person name="Miller J.R."/>
            <person name="Flanigan M.J."/>
            <person name="Edwards N.J."/>
            <person name="Bolanos R."/>
            <person name="Fasulo D."/>
            <person name="Halldorsson B.V."/>
            <person name="Hannenhalli S."/>
            <person name="Turner R."/>
            <person name="Yooseph S."/>
            <person name="Lu F."/>
            <person name="Nusskern D.R."/>
            <person name="Shue B.C."/>
            <person name="Zheng X.H."/>
            <person name="Zhong F."/>
            <person name="Delcher A.L."/>
            <person name="Huson D.H."/>
            <person name="Kravitz S.A."/>
            <person name="Mouchard L."/>
            <person name="Reinert K."/>
            <person name="Remington K.A."/>
            <person name="Clark A.G."/>
            <person name="Waterman M.S."/>
            <person name="Eichler E.E."/>
            <person name="Adams M.D."/>
            <person name="Hunkapiller M.W."/>
            <person name="Myers E.W."/>
            <person name="Venter J.C."/>
        </authorList>
    </citation>
    <scope>NUCLEOTIDE SEQUENCE [LARGE SCALE GENOMIC DNA]</scope>
</reference>
<reference key="6">
    <citation type="journal article" date="2004" name="Genome Res.">
        <title>The status, quality, and expansion of the NIH full-length cDNA project: the Mammalian Gene Collection (MGC).</title>
        <authorList>
            <consortium name="The MGC Project Team"/>
        </authorList>
    </citation>
    <scope>NUCLEOTIDE SEQUENCE [LARGE SCALE MRNA]</scope>
    <source>
        <tissue>Testis</tissue>
    </source>
</reference>
<reference key="7">
    <citation type="journal article" date="2005" name="Biochemistry">
        <title>Characterization of the 3' --&gt; 5' exonuclease activity found in human nucleoside diphosphate kinase 1 (NDK1) and several of its homologues.</title>
        <authorList>
            <person name="Yoon J.H."/>
            <person name="Singh P."/>
            <person name="Lee D.H."/>
            <person name="Qiu J."/>
            <person name="Cai S."/>
            <person name="O'Connor T.R."/>
            <person name="Chen Y."/>
            <person name="Shen B."/>
            <person name="Pfeifer G.P."/>
        </authorList>
    </citation>
    <scope>FUNCTION</scope>
    <scope>CATALYTIC ACTIVITY</scope>
</reference>
<reference key="8">
    <citation type="journal article" date="2020" name="Clin. Genet.">
        <title>A nonsense variant in NME5 causes human primary ciliary dyskinesia with radial spoke defects.</title>
        <authorList>
            <person name="Cho E.H."/>
            <person name="Huh H.J."/>
            <person name="Jeong I."/>
            <person name="Lee N.Y."/>
            <person name="Koh W.J."/>
            <person name="Park H.C."/>
            <person name="Ki C.S."/>
        </authorList>
    </citation>
    <scope>INVOLVEMENT IN CILD48</scope>
    <scope>VARIANT CILD48 191-TRP--TYR-212 DEL</scope>
</reference>
<reference key="9">
    <citation type="journal article" date="2020" name="Stem Cell Res.">
        <title>Generation of two hiPSC clones (MHHi019-A, MHHi019-B) from a primary ciliary dyskinesia patient carrying a homozygous deletion in the NME5 gene (c.415delA (p.Ile139Tyrfs*8)).</title>
        <authorList>
            <person name="Sahabian A."/>
            <person name="von Schlehdorn L."/>
            <person name="Drick N."/>
            <person name="Pink I."/>
            <person name="Dahlmann J."/>
            <person name="Haase A."/>
            <person name="Goehring G."/>
            <person name="Welte T."/>
            <person name="Martin U."/>
            <person name="Ringshausen F.C."/>
            <person name="Olmer R."/>
        </authorList>
    </citation>
    <scope>INVOLVEMENT IN CILD48</scope>
</reference>
<comment type="function">
    <text evidence="1 2 3 6">Functions as part of axonemal radial spoke complexes that play an important part in the motility of sperm and cilia. Does not seem to have nucleoside diphosphate kinase (NDPK) activity (PubMed:9742940). Confers protection from cell death by BAX and alters the cellular levels of several antioxidant enzymes including GPX5. May play a role in spermiogenesis by increasing the ability of late-stage spermatids to eliminate reactive oxygen species (By similarity). Exhibits a 3'-5' exonuclease activity with a preference for single-stranded DNA, suggesting roles in DNA proofreading and repair (PubMed:16313181).</text>
</comment>
<comment type="subunit">
    <text evidence="2">Component of the axonemal radial spoke complex 1 (RS1), at least composed of spoke head proteins RSPH1, RSPH3, RSPH9 and the cilia-specific component RSPH4A or sperm-specific component RSPH6A, spoke stalk proteins RSPH14, DNAJB13, DYDC1, ROPN1L and NME5, and the anchor protein IQUB (By similarity). Interacts with IQUB (By similarity).</text>
</comment>
<comment type="interaction">
    <interactant intactId="EBI-740667">
        <id>P56597</id>
    </interactant>
    <interactant intactId="EBI-930964">
        <id>P54253</id>
        <label>ATXN1</label>
    </interactant>
    <organismsDiffer>false</organismsDiffer>
    <experiments>3</experiments>
</comment>
<comment type="interaction">
    <interactant intactId="EBI-740667">
        <id>P56597</id>
    </interactant>
    <interactant intactId="EBI-740680">
        <id>Q8WWB3</id>
        <label>DYDC1</label>
    </interactant>
    <organismsDiffer>false</organismsDiffer>
    <experiments>8</experiments>
</comment>
<comment type="interaction">
    <interactant intactId="EBI-740667">
        <id>P56597</id>
    </interactant>
    <interactant intactId="EBI-749277">
        <id>Q96IM9</id>
        <label>DYDC2</label>
    </interactant>
    <organismsDiffer>false</organismsDiffer>
    <experiments>5</experiments>
</comment>
<comment type="interaction">
    <interactant intactId="EBI-740667">
        <id>P56597</id>
    </interactant>
    <interactant intactId="EBI-466029">
        <id>P42858</id>
        <label>HTT</label>
    </interactant>
    <organismsDiffer>false</organismsDiffer>
    <experiments>6</experiments>
</comment>
<comment type="interaction">
    <interactant intactId="EBI-740667">
        <id>P56597</id>
    </interactant>
    <interactant intactId="EBI-1055254">
        <id>Q8WXH2</id>
        <label>JPH3</label>
    </interactant>
    <organismsDiffer>false</organismsDiffer>
    <experiments>3</experiments>
</comment>
<comment type="subcellular location">
    <subcellularLocation>
        <location evidence="2">Cell projection</location>
        <location evidence="2">Cilium</location>
    </subcellularLocation>
    <subcellularLocation>
        <location evidence="2">Cytoplasm</location>
        <location evidence="2">Cytoskeleton</location>
        <location evidence="2">Flagellum axoneme</location>
    </subcellularLocation>
</comment>
<comment type="tissue specificity">
    <text evidence="6">Specifically expressed in testis germinal cells.</text>
</comment>
<comment type="domain">
    <text evidence="8">Does not possess all residues considered to be crucial for the NDPK activity.</text>
</comment>
<comment type="disease" evidence="4 5">
    <disease id="DI-06504">
        <name>Ciliary dyskinesia, primary, 48, without situs inversus</name>
        <acronym>CILD48</acronym>
        <description>A form of primary ciliary dyskinesia, a disorder characterized by abnormalities of motile cilia. Respiratory infections leading to chronic inflammation and bronchiectasis are recurrent, due to defects in the respiratory cilia. CILD48 is an autosomal recessive form. No situs abnormalities have been observed.</description>
        <dbReference type="MIM" id="620032"/>
    </disease>
    <text>The disease is caused by variants affecting the gene represented in this entry.</text>
</comment>
<comment type="similarity">
    <text evidence="7">Belongs to the NDK family.</text>
</comment>
<evidence type="ECO:0000250" key="1">
    <source>
        <dbReference type="UniProtKB" id="Q6DGQ8"/>
    </source>
</evidence>
<evidence type="ECO:0000250" key="2">
    <source>
        <dbReference type="UniProtKB" id="Q99MH5"/>
    </source>
</evidence>
<evidence type="ECO:0000269" key="3">
    <source>
    </source>
</evidence>
<evidence type="ECO:0000269" key="4">
    <source>
    </source>
</evidence>
<evidence type="ECO:0000269" key="5">
    <source>
    </source>
</evidence>
<evidence type="ECO:0000269" key="6">
    <source>
    </source>
</evidence>
<evidence type="ECO:0000305" key="7"/>
<evidence type="ECO:0000305" key="8">
    <source>
    </source>
</evidence>
<evidence type="ECO:0000312" key="9">
    <source>
        <dbReference type="HGNC" id="HGNC:7853"/>
    </source>
</evidence>
<keyword id="KW-0002">3D-structure</keyword>
<keyword id="KW-0966">Cell projection</keyword>
<keyword id="KW-1186">Ciliopathy</keyword>
<keyword id="KW-0969">Cilium</keyword>
<keyword id="KW-0963">Cytoplasm</keyword>
<keyword id="KW-0206">Cytoskeleton</keyword>
<keyword id="KW-0217">Developmental protein</keyword>
<keyword id="KW-0221">Differentiation</keyword>
<keyword id="KW-0282">Flagellum</keyword>
<keyword id="KW-0378">Hydrolase</keyword>
<keyword id="KW-0990">Primary ciliary dyskinesia</keyword>
<keyword id="KW-1267">Proteomics identification</keyword>
<keyword id="KW-1185">Reference proteome</keyword>
<keyword id="KW-0744">Spermatogenesis</keyword>
<accession>P56597</accession>
<accession>B2R5G7</accession>
<dbReference type="EC" id="3.1.-.-" evidence="3"/>
<dbReference type="EMBL" id="Y14992">
    <property type="protein sequence ID" value="CAA75226.1"/>
    <property type="molecule type" value="mRNA"/>
</dbReference>
<dbReference type="EMBL" id="AF067724">
    <property type="protein sequence ID" value="AAC64358.1"/>
    <property type="molecule type" value="mRNA"/>
</dbReference>
<dbReference type="EMBL" id="U90450">
    <property type="protein sequence ID" value="AAC69440.1"/>
    <property type="molecule type" value="mRNA"/>
</dbReference>
<dbReference type="EMBL" id="AK312181">
    <property type="protein sequence ID" value="BAG35114.1"/>
    <property type="molecule type" value="mRNA"/>
</dbReference>
<dbReference type="EMBL" id="CH471062">
    <property type="protein sequence ID" value="EAW62164.1"/>
    <property type="molecule type" value="Genomic_DNA"/>
</dbReference>
<dbReference type="EMBL" id="BC026182">
    <property type="protein sequence ID" value="AAH26182.1"/>
    <property type="molecule type" value="mRNA"/>
</dbReference>
<dbReference type="CCDS" id="CCDS4197.1"/>
<dbReference type="RefSeq" id="NP_003542.1">
    <property type="nucleotide sequence ID" value="NM_003551.3"/>
</dbReference>
<dbReference type="PDB" id="8J07">
    <property type="method" value="EM"/>
    <property type="resolution" value="4.10 A"/>
    <property type="chains" value="X/Y/x/y=1-212"/>
</dbReference>
<dbReference type="PDBsum" id="8J07"/>
<dbReference type="EMDB" id="EMD-35888"/>
<dbReference type="SMR" id="P56597"/>
<dbReference type="BioGRID" id="113972">
    <property type="interactions" value="11"/>
</dbReference>
<dbReference type="ComplexPortal" id="CPX-8163">
    <property type="entry name" value="Radial spoke complex, ciliiar variant"/>
</dbReference>
<dbReference type="ComplexPortal" id="CPX-8164">
    <property type="entry name" value="Radial spoke complex, flagellar variant"/>
</dbReference>
<dbReference type="FunCoup" id="P56597">
    <property type="interactions" value="22"/>
</dbReference>
<dbReference type="IntAct" id="P56597">
    <property type="interactions" value="12"/>
</dbReference>
<dbReference type="MINT" id="P56597"/>
<dbReference type="STRING" id="9606.ENSP00000265191"/>
<dbReference type="iPTMnet" id="P56597"/>
<dbReference type="PhosphoSitePlus" id="P56597"/>
<dbReference type="SwissPalm" id="P56597"/>
<dbReference type="BioMuta" id="NME5"/>
<dbReference type="DMDM" id="3914118"/>
<dbReference type="MassIVE" id="P56597"/>
<dbReference type="PaxDb" id="9606-ENSP00000265191"/>
<dbReference type="PeptideAtlas" id="P56597"/>
<dbReference type="ProteomicsDB" id="56930"/>
<dbReference type="Antibodypedia" id="26568">
    <property type="antibodies" value="184 antibodies from 26 providers"/>
</dbReference>
<dbReference type="DNASU" id="8382"/>
<dbReference type="Ensembl" id="ENST00000265191.4">
    <property type="protein sequence ID" value="ENSP00000265191.2"/>
    <property type="gene ID" value="ENSG00000112981.5"/>
</dbReference>
<dbReference type="GeneID" id="8382"/>
<dbReference type="KEGG" id="hsa:8382"/>
<dbReference type="MANE-Select" id="ENST00000265191.4">
    <property type="protein sequence ID" value="ENSP00000265191.2"/>
    <property type="RefSeq nucleotide sequence ID" value="NM_003551.3"/>
    <property type="RefSeq protein sequence ID" value="NP_003542.1"/>
</dbReference>
<dbReference type="UCSC" id="uc003lce.4">
    <property type="organism name" value="human"/>
</dbReference>
<dbReference type="AGR" id="HGNC:7853"/>
<dbReference type="CTD" id="8382"/>
<dbReference type="DisGeNET" id="8382"/>
<dbReference type="GeneCards" id="NME5"/>
<dbReference type="HGNC" id="HGNC:7853">
    <property type="gene designation" value="NME5"/>
</dbReference>
<dbReference type="HPA" id="ENSG00000112981">
    <property type="expression patterns" value="Tissue enhanced (fallopian tube, testis)"/>
</dbReference>
<dbReference type="MalaCards" id="NME5"/>
<dbReference type="MIM" id="603575">
    <property type="type" value="gene"/>
</dbReference>
<dbReference type="MIM" id="620032">
    <property type="type" value="phenotype"/>
</dbReference>
<dbReference type="neXtProt" id="NX_P56597"/>
<dbReference type="OpenTargets" id="ENSG00000112981"/>
<dbReference type="Orphanet" id="244">
    <property type="disease" value="Primary ciliary dyskinesia"/>
</dbReference>
<dbReference type="PharmGKB" id="PA31658"/>
<dbReference type="VEuPathDB" id="HostDB:ENSG00000112981"/>
<dbReference type="eggNOG" id="KOG0888">
    <property type="taxonomic scope" value="Eukaryota"/>
</dbReference>
<dbReference type="GeneTree" id="ENSGT00940000159595"/>
<dbReference type="HOGENOM" id="CLU_060216_2_0_1"/>
<dbReference type="InParanoid" id="P56597"/>
<dbReference type="OMA" id="HNAISYW"/>
<dbReference type="OrthoDB" id="1729737at2759"/>
<dbReference type="PAN-GO" id="P56597">
    <property type="GO annotations" value="3 GO annotations based on evolutionary models"/>
</dbReference>
<dbReference type="PhylomeDB" id="P56597"/>
<dbReference type="TreeFam" id="TF354225"/>
<dbReference type="PathwayCommons" id="P56597"/>
<dbReference type="SignaLink" id="P56597"/>
<dbReference type="BioGRID-ORCS" id="8382">
    <property type="hits" value="14 hits in 1148 CRISPR screens"/>
</dbReference>
<dbReference type="ChiTaRS" id="NME5">
    <property type="organism name" value="human"/>
</dbReference>
<dbReference type="GenomeRNAi" id="8382"/>
<dbReference type="Pharos" id="P56597">
    <property type="development level" value="Tbio"/>
</dbReference>
<dbReference type="PRO" id="PR:P56597"/>
<dbReference type="Proteomes" id="UP000005640">
    <property type="component" value="Chromosome 5"/>
</dbReference>
<dbReference type="RNAct" id="P56597">
    <property type="molecule type" value="protein"/>
</dbReference>
<dbReference type="Bgee" id="ENSG00000112981">
    <property type="expression patterns" value="Expressed in bronchial epithelial cell and 148 other cell types or tissues"/>
</dbReference>
<dbReference type="ExpressionAtlas" id="P56597">
    <property type="expression patterns" value="baseline and differential"/>
</dbReference>
<dbReference type="GO" id="GO:0097729">
    <property type="term" value="C:9+2 motile cilium"/>
    <property type="evidence" value="ECO:0000250"/>
    <property type="project" value="UniProtKB"/>
</dbReference>
<dbReference type="GO" id="GO:0005929">
    <property type="term" value="C:cilium"/>
    <property type="evidence" value="ECO:0000318"/>
    <property type="project" value="GO_Central"/>
</dbReference>
<dbReference type="GO" id="GO:0005576">
    <property type="term" value="C:extracellular region"/>
    <property type="evidence" value="ECO:0007669"/>
    <property type="project" value="GOC"/>
</dbReference>
<dbReference type="GO" id="GO:0001534">
    <property type="term" value="C:radial spoke"/>
    <property type="evidence" value="ECO:0000250"/>
    <property type="project" value="UniProtKB"/>
</dbReference>
<dbReference type="GO" id="GO:0036126">
    <property type="term" value="C:sperm flagellum"/>
    <property type="evidence" value="ECO:0007669"/>
    <property type="project" value="Ensembl"/>
</dbReference>
<dbReference type="GO" id="GO:0008408">
    <property type="term" value="F:3'-5' exonuclease activity"/>
    <property type="evidence" value="ECO:0000314"/>
    <property type="project" value="UniProtKB"/>
</dbReference>
<dbReference type="GO" id="GO:0004550">
    <property type="term" value="F:nucleoside diphosphate kinase activity"/>
    <property type="evidence" value="ECO:0000304"/>
    <property type="project" value="ProtInc"/>
</dbReference>
<dbReference type="GO" id="GO:0060271">
    <property type="term" value="P:cilium assembly"/>
    <property type="evidence" value="ECO:0007669"/>
    <property type="project" value="Ensembl"/>
</dbReference>
<dbReference type="GO" id="GO:0003341">
    <property type="term" value="P:cilium movement"/>
    <property type="evidence" value="ECO:0000318"/>
    <property type="project" value="GO_Central"/>
</dbReference>
<dbReference type="GO" id="GO:0006241">
    <property type="term" value="P:CTP biosynthetic process"/>
    <property type="evidence" value="ECO:0007669"/>
    <property type="project" value="InterPro"/>
</dbReference>
<dbReference type="GO" id="GO:0003351">
    <property type="term" value="P:epithelial cilium movement involved in extracellular fluid movement"/>
    <property type="evidence" value="ECO:0007669"/>
    <property type="project" value="Ensembl"/>
</dbReference>
<dbReference type="GO" id="GO:0051649">
    <property type="term" value="P:establishment of localization in cell"/>
    <property type="evidence" value="ECO:0007669"/>
    <property type="project" value="Ensembl"/>
</dbReference>
<dbReference type="GO" id="GO:0006183">
    <property type="term" value="P:GTP biosynthetic process"/>
    <property type="evidence" value="ECO:0007669"/>
    <property type="project" value="InterPro"/>
</dbReference>
<dbReference type="GO" id="GO:1902176">
    <property type="term" value="P:negative regulation of oxidative stress-induced intrinsic apoptotic signaling pathway"/>
    <property type="evidence" value="ECO:0000318"/>
    <property type="project" value="GO_Central"/>
</dbReference>
<dbReference type="GO" id="GO:0009116">
    <property type="term" value="P:nucleoside metabolic process"/>
    <property type="evidence" value="ECO:0000304"/>
    <property type="project" value="ProtInc"/>
</dbReference>
<dbReference type="GO" id="GO:0007286">
    <property type="term" value="P:spermatid development"/>
    <property type="evidence" value="ECO:0000315"/>
    <property type="project" value="UniProtKB"/>
</dbReference>
<dbReference type="GO" id="GO:0007283">
    <property type="term" value="P:spermatogenesis"/>
    <property type="evidence" value="ECO:0000304"/>
    <property type="project" value="ProtInc"/>
</dbReference>
<dbReference type="GO" id="GO:0006228">
    <property type="term" value="P:UTP biosynthetic process"/>
    <property type="evidence" value="ECO:0007669"/>
    <property type="project" value="InterPro"/>
</dbReference>
<dbReference type="GO" id="GO:0021591">
    <property type="term" value="P:ventricular system development"/>
    <property type="evidence" value="ECO:0007669"/>
    <property type="project" value="Ensembl"/>
</dbReference>
<dbReference type="CDD" id="cd22970">
    <property type="entry name" value="DD_NDKH5-like"/>
    <property type="match status" value="1"/>
</dbReference>
<dbReference type="CDD" id="cd04418">
    <property type="entry name" value="NDPk5"/>
    <property type="match status" value="1"/>
</dbReference>
<dbReference type="FunFam" id="1.20.890.10:FF:000008">
    <property type="entry name" value="Nucleoside diphosphate kinase homolog 5"/>
    <property type="match status" value="1"/>
</dbReference>
<dbReference type="FunFam" id="3.30.70.141:FF:000008">
    <property type="entry name" value="nucleoside diphosphate kinase homolog 5"/>
    <property type="match status" value="1"/>
</dbReference>
<dbReference type="Gene3D" id="1.20.890.10">
    <property type="entry name" value="cAMP-dependent protein kinase regulatory subunit, dimerization-anchoring domain"/>
    <property type="match status" value="1"/>
</dbReference>
<dbReference type="Gene3D" id="3.30.70.141">
    <property type="entry name" value="Nucleoside diphosphate kinase-like domain"/>
    <property type="match status" value="1"/>
</dbReference>
<dbReference type="InterPro" id="IPR007858">
    <property type="entry name" value="Dpy-30_motif"/>
</dbReference>
<dbReference type="InterPro" id="IPR034907">
    <property type="entry name" value="NDK-like_dom"/>
</dbReference>
<dbReference type="InterPro" id="IPR036850">
    <property type="entry name" value="NDK-like_dom_sf"/>
</dbReference>
<dbReference type="InterPro" id="IPR012410">
    <property type="entry name" value="NDK_H5"/>
</dbReference>
<dbReference type="InterPro" id="IPR001564">
    <property type="entry name" value="Nucleoside_diP_kinase"/>
</dbReference>
<dbReference type="PANTHER" id="PTHR46161">
    <property type="entry name" value="NUCLEOSIDE DIPHOSPHATE KINASE"/>
    <property type="match status" value="1"/>
</dbReference>
<dbReference type="PANTHER" id="PTHR46161:SF1">
    <property type="entry name" value="NUCLEOSIDE DIPHOSPHATE KINASE HOMOLOG 5"/>
    <property type="match status" value="1"/>
</dbReference>
<dbReference type="Pfam" id="PF05186">
    <property type="entry name" value="Dpy-30"/>
    <property type="match status" value="1"/>
</dbReference>
<dbReference type="Pfam" id="PF00334">
    <property type="entry name" value="NDK"/>
    <property type="match status" value="1"/>
</dbReference>
<dbReference type="PIRSF" id="PIRSF036504">
    <property type="entry name" value="NDK_H5"/>
    <property type="match status" value="1"/>
</dbReference>
<dbReference type="PRINTS" id="PR01243">
    <property type="entry name" value="NUCDPKINASE"/>
</dbReference>
<dbReference type="SMART" id="SM00562">
    <property type="entry name" value="NDK"/>
    <property type="match status" value="1"/>
</dbReference>
<dbReference type="SUPFAM" id="SSF54919">
    <property type="entry name" value="Nucleoside diphosphate kinase, NDK"/>
    <property type="match status" value="1"/>
</dbReference>
<dbReference type="PROSITE" id="PS51374">
    <property type="entry name" value="NDPK_LIKE"/>
    <property type="match status" value="1"/>
</dbReference>
<name>NDK5_HUMAN</name>